<keyword id="KW-0963">Cytoplasm</keyword>
<keyword id="KW-0378">Hydrolase</keyword>
<keyword id="KW-0464">Manganese</keyword>
<keyword id="KW-0479">Metal-binding</keyword>
<comment type="catalytic activity">
    <reaction evidence="1">
        <text>diphosphate + H2O = 2 phosphate + H(+)</text>
        <dbReference type="Rhea" id="RHEA:24576"/>
        <dbReference type="ChEBI" id="CHEBI:15377"/>
        <dbReference type="ChEBI" id="CHEBI:15378"/>
        <dbReference type="ChEBI" id="CHEBI:33019"/>
        <dbReference type="ChEBI" id="CHEBI:43474"/>
        <dbReference type="EC" id="3.6.1.1"/>
    </reaction>
</comment>
<comment type="cofactor">
    <cofactor evidence="1">
        <name>Mn(2+)</name>
        <dbReference type="ChEBI" id="CHEBI:29035"/>
    </cofactor>
    <text evidence="1">Binds 2 manganese ions per subunit.</text>
</comment>
<comment type="subcellular location">
    <subcellularLocation>
        <location evidence="1">Cytoplasm</location>
    </subcellularLocation>
</comment>
<comment type="similarity">
    <text evidence="1">Belongs to the PPase class C family.</text>
</comment>
<proteinExistence type="inferred from homology"/>
<sequence length="309" mass="33763">MEKVLVFGHKNPDTDAICSAIAYAELKKELGMNAEPVRLGEISGETQFALDYFKVEGPRFVETVANEVDNVILVDHNERQQSANDIESVRVLEVIDHHRIANFETSDPIYYRCEPVGCTATILNKMYKENGITIRKEVAGLMLSAIISDSLLFKSPTCTEQDVAAARELAEIAGVDADKYGLEMLKAGADLSGKTMEQLISLDAKEFQMGNAKVEIAQVNAVDTNDVLVHQAELEKVISAVVEEKGLDLFLFVVTDILTNDSVGLAIGKAANIVEKAYNVSLENNTATLKGVVSRKKQIVPVLTEAFQA</sequence>
<organism>
    <name type="scientific">Bacillus cereus (strain AH187)</name>
    <dbReference type="NCBI Taxonomy" id="405534"/>
    <lineage>
        <taxon>Bacteria</taxon>
        <taxon>Bacillati</taxon>
        <taxon>Bacillota</taxon>
        <taxon>Bacilli</taxon>
        <taxon>Bacillales</taxon>
        <taxon>Bacillaceae</taxon>
        <taxon>Bacillus</taxon>
        <taxon>Bacillus cereus group</taxon>
    </lineage>
</organism>
<feature type="chain" id="PRO_1000192513" description="Probable manganese-dependent inorganic pyrophosphatase">
    <location>
        <begin position="1"/>
        <end position="309"/>
    </location>
</feature>
<feature type="binding site" evidence="1">
    <location>
        <position position="9"/>
    </location>
    <ligand>
        <name>Mn(2+)</name>
        <dbReference type="ChEBI" id="CHEBI:29035"/>
        <label>1</label>
    </ligand>
</feature>
<feature type="binding site" evidence="1">
    <location>
        <position position="13"/>
    </location>
    <ligand>
        <name>Mn(2+)</name>
        <dbReference type="ChEBI" id="CHEBI:29035"/>
        <label>1</label>
    </ligand>
</feature>
<feature type="binding site" evidence="1">
    <location>
        <position position="15"/>
    </location>
    <ligand>
        <name>Mn(2+)</name>
        <dbReference type="ChEBI" id="CHEBI:29035"/>
        <label>2</label>
    </ligand>
</feature>
<feature type="binding site" evidence="1">
    <location>
        <position position="75"/>
    </location>
    <ligand>
        <name>Mn(2+)</name>
        <dbReference type="ChEBI" id="CHEBI:29035"/>
        <label>1</label>
    </ligand>
</feature>
<feature type="binding site" evidence="1">
    <location>
        <position position="75"/>
    </location>
    <ligand>
        <name>Mn(2+)</name>
        <dbReference type="ChEBI" id="CHEBI:29035"/>
        <label>2</label>
    </ligand>
</feature>
<feature type="binding site" evidence="1">
    <location>
        <position position="97"/>
    </location>
    <ligand>
        <name>Mn(2+)</name>
        <dbReference type="ChEBI" id="CHEBI:29035"/>
        <label>2</label>
    </ligand>
</feature>
<feature type="binding site" evidence="1">
    <location>
        <position position="149"/>
    </location>
    <ligand>
        <name>Mn(2+)</name>
        <dbReference type="ChEBI" id="CHEBI:29035"/>
        <label>2</label>
    </ligand>
</feature>
<evidence type="ECO:0000255" key="1">
    <source>
        <dbReference type="HAMAP-Rule" id="MF_00207"/>
    </source>
</evidence>
<accession>B7HUD5</accession>
<dbReference type="EC" id="3.6.1.1" evidence="1"/>
<dbReference type="EMBL" id="CP001177">
    <property type="protein sequence ID" value="ACJ81335.1"/>
    <property type="molecule type" value="Genomic_DNA"/>
</dbReference>
<dbReference type="SMR" id="B7HUD5"/>
<dbReference type="KEGG" id="bcr:BCAH187_A2875"/>
<dbReference type="HOGENOM" id="CLU_025243_0_1_9"/>
<dbReference type="Proteomes" id="UP000002214">
    <property type="component" value="Chromosome"/>
</dbReference>
<dbReference type="GO" id="GO:0005737">
    <property type="term" value="C:cytoplasm"/>
    <property type="evidence" value="ECO:0007669"/>
    <property type="project" value="UniProtKB-SubCell"/>
</dbReference>
<dbReference type="GO" id="GO:0004427">
    <property type="term" value="F:inorganic diphosphate phosphatase activity"/>
    <property type="evidence" value="ECO:0007669"/>
    <property type="project" value="UniProtKB-UniRule"/>
</dbReference>
<dbReference type="GO" id="GO:0030145">
    <property type="term" value="F:manganese ion binding"/>
    <property type="evidence" value="ECO:0007669"/>
    <property type="project" value="UniProtKB-UniRule"/>
</dbReference>
<dbReference type="FunFam" id="3.10.310.20:FF:000001">
    <property type="entry name" value="Probable manganese-dependent inorganic pyrophosphatase"/>
    <property type="match status" value="1"/>
</dbReference>
<dbReference type="FunFam" id="3.90.1640.10:FF:000001">
    <property type="entry name" value="Probable manganese-dependent inorganic pyrophosphatase"/>
    <property type="match status" value="1"/>
</dbReference>
<dbReference type="Gene3D" id="3.10.310.20">
    <property type="entry name" value="DHHA2 domain"/>
    <property type="match status" value="1"/>
</dbReference>
<dbReference type="Gene3D" id="3.90.1640.10">
    <property type="entry name" value="inorganic pyrophosphatase (n-terminal core)"/>
    <property type="match status" value="1"/>
</dbReference>
<dbReference type="HAMAP" id="MF_00207">
    <property type="entry name" value="PPase_C"/>
    <property type="match status" value="1"/>
</dbReference>
<dbReference type="InterPro" id="IPR001667">
    <property type="entry name" value="DDH_dom"/>
</dbReference>
<dbReference type="InterPro" id="IPR038763">
    <property type="entry name" value="DHH_sf"/>
</dbReference>
<dbReference type="InterPro" id="IPR004097">
    <property type="entry name" value="DHHA2"/>
</dbReference>
<dbReference type="InterPro" id="IPR038222">
    <property type="entry name" value="DHHA2_dom_sf"/>
</dbReference>
<dbReference type="InterPro" id="IPR022934">
    <property type="entry name" value="Mn-dep_inorganic_PyrPase"/>
</dbReference>
<dbReference type="NCBIfam" id="NF003877">
    <property type="entry name" value="PRK05427.1"/>
    <property type="match status" value="1"/>
</dbReference>
<dbReference type="PANTHER" id="PTHR12112">
    <property type="entry name" value="BNIP - RELATED"/>
    <property type="match status" value="1"/>
</dbReference>
<dbReference type="PANTHER" id="PTHR12112:SF22">
    <property type="entry name" value="MANGANESE-DEPENDENT INORGANIC PYROPHOSPHATASE-RELATED"/>
    <property type="match status" value="1"/>
</dbReference>
<dbReference type="Pfam" id="PF01368">
    <property type="entry name" value="DHH"/>
    <property type="match status" value="1"/>
</dbReference>
<dbReference type="Pfam" id="PF02833">
    <property type="entry name" value="DHHA2"/>
    <property type="match status" value="1"/>
</dbReference>
<dbReference type="SMART" id="SM01131">
    <property type="entry name" value="DHHA2"/>
    <property type="match status" value="1"/>
</dbReference>
<dbReference type="SUPFAM" id="SSF64182">
    <property type="entry name" value="DHH phosphoesterases"/>
    <property type="match status" value="1"/>
</dbReference>
<protein>
    <recommendedName>
        <fullName evidence="1">Probable manganese-dependent inorganic pyrophosphatase</fullName>
        <ecNumber evidence="1">3.6.1.1</ecNumber>
    </recommendedName>
    <alternativeName>
        <fullName evidence="1">Pyrophosphate phospho-hydrolase</fullName>
        <shortName evidence="1">PPase</shortName>
    </alternativeName>
</protein>
<gene>
    <name evidence="1" type="primary">ppaC</name>
    <name type="ordered locus">BCAH187_A2875</name>
</gene>
<name>PPAC_BACC7</name>
<reference key="1">
    <citation type="submission" date="2008-10" db="EMBL/GenBank/DDBJ databases">
        <title>Genome sequence of Bacillus cereus AH187.</title>
        <authorList>
            <person name="Dodson R.J."/>
            <person name="Durkin A.S."/>
            <person name="Rosovitz M.J."/>
            <person name="Rasko D.A."/>
            <person name="Kolsto A.B."/>
            <person name="Okstad O.A."/>
            <person name="Ravel J."/>
            <person name="Sutton G."/>
        </authorList>
    </citation>
    <scope>NUCLEOTIDE SEQUENCE [LARGE SCALE GENOMIC DNA]</scope>
    <source>
        <strain>AH187</strain>
    </source>
</reference>